<accession>C5BR01</accession>
<gene>
    <name evidence="1" type="primary">accA</name>
    <name type="ordered locus">TERTU_1077</name>
</gene>
<name>ACCA_TERTT</name>
<sequence length="318" mass="35400">MNLNYLDFEQPIAVLEGKIQELQLVGTDNDLNISEEIDRLKEKSTKLTENIYSSLTPWQIVQVARHPQRPYSADYIARMFDDWDELHGDRHFGDDKAIIGGVGRLNGRPVMVIGEEKGRSVKEKVERNFGMPKPEGYRKALRLMEMAERFKMPVLTLIDTPGAYPGIDSEERGISESIAQNLAVMSRLRTPIICTVIGEGSSGGALAIGVGDYLNMLQYSTYFVISPEGCANIIWKTVEKAPLAAEAMGVTSSVLEELGIVDETIAEPLGGAHRDIDTMAEKLKTRLSEQLDQLVAEDMDSLLERRYKRLMSYGNAAS</sequence>
<evidence type="ECO:0000255" key="1">
    <source>
        <dbReference type="HAMAP-Rule" id="MF_00823"/>
    </source>
</evidence>
<evidence type="ECO:0000255" key="2">
    <source>
        <dbReference type="PROSITE-ProRule" id="PRU01137"/>
    </source>
</evidence>
<reference key="1">
    <citation type="journal article" date="2009" name="PLoS ONE">
        <title>The complete genome of Teredinibacter turnerae T7901: an intracellular endosymbiont of marine wood-boring bivalves (shipworms).</title>
        <authorList>
            <person name="Yang J.C."/>
            <person name="Madupu R."/>
            <person name="Durkin A.S."/>
            <person name="Ekborg N.A."/>
            <person name="Pedamallu C.S."/>
            <person name="Hostetler J.B."/>
            <person name="Radune D."/>
            <person name="Toms B.S."/>
            <person name="Henrissat B."/>
            <person name="Coutinho P.M."/>
            <person name="Schwarz S."/>
            <person name="Field L."/>
            <person name="Trindade-Silva A.E."/>
            <person name="Soares C.A.G."/>
            <person name="Elshahawi S."/>
            <person name="Hanora A."/>
            <person name="Schmidt E.W."/>
            <person name="Haygood M.G."/>
            <person name="Posfai J."/>
            <person name="Benner J."/>
            <person name="Madinger C."/>
            <person name="Nove J."/>
            <person name="Anton B."/>
            <person name="Chaudhary K."/>
            <person name="Foster J."/>
            <person name="Holman A."/>
            <person name="Kumar S."/>
            <person name="Lessard P.A."/>
            <person name="Luyten Y.A."/>
            <person name="Slatko B."/>
            <person name="Wood N."/>
            <person name="Wu B."/>
            <person name="Teplitski M."/>
            <person name="Mougous J.D."/>
            <person name="Ward N."/>
            <person name="Eisen J.A."/>
            <person name="Badger J.H."/>
            <person name="Distel D.L."/>
        </authorList>
    </citation>
    <scope>NUCLEOTIDE SEQUENCE [LARGE SCALE GENOMIC DNA]</scope>
    <source>
        <strain>ATCC 39867 / T7901</strain>
    </source>
</reference>
<dbReference type="EC" id="2.1.3.15" evidence="1"/>
<dbReference type="EMBL" id="CP001614">
    <property type="protein sequence ID" value="ACR14435.1"/>
    <property type="molecule type" value="Genomic_DNA"/>
</dbReference>
<dbReference type="RefSeq" id="WP_015820549.1">
    <property type="nucleotide sequence ID" value="NC_012997.1"/>
</dbReference>
<dbReference type="SMR" id="C5BR01"/>
<dbReference type="STRING" id="377629.TERTU_1077"/>
<dbReference type="KEGG" id="ttu:TERTU_1077"/>
<dbReference type="eggNOG" id="COG0825">
    <property type="taxonomic scope" value="Bacteria"/>
</dbReference>
<dbReference type="HOGENOM" id="CLU_015486_0_2_6"/>
<dbReference type="OrthoDB" id="9808023at2"/>
<dbReference type="UniPathway" id="UPA00655">
    <property type="reaction ID" value="UER00711"/>
</dbReference>
<dbReference type="Proteomes" id="UP000009080">
    <property type="component" value="Chromosome"/>
</dbReference>
<dbReference type="GO" id="GO:0009317">
    <property type="term" value="C:acetyl-CoA carboxylase complex"/>
    <property type="evidence" value="ECO:0007669"/>
    <property type="project" value="InterPro"/>
</dbReference>
<dbReference type="GO" id="GO:0003989">
    <property type="term" value="F:acetyl-CoA carboxylase activity"/>
    <property type="evidence" value="ECO:0007669"/>
    <property type="project" value="InterPro"/>
</dbReference>
<dbReference type="GO" id="GO:0005524">
    <property type="term" value="F:ATP binding"/>
    <property type="evidence" value="ECO:0007669"/>
    <property type="project" value="UniProtKB-KW"/>
</dbReference>
<dbReference type="GO" id="GO:0016743">
    <property type="term" value="F:carboxyl- or carbamoyltransferase activity"/>
    <property type="evidence" value="ECO:0007669"/>
    <property type="project" value="UniProtKB-UniRule"/>
</dbReference>
<dbReference type="GO" id="GO:0006633">
    <property type="term" value="P:fatty acid biosynthetic process"/>
    <property type="evidence" value="ECO:0007669"/>
    <property type="project" value="UniProtKB-KW"/>
</dbReference>
<dbReference type="GO" id="GO:2001295">
    <property type="term" value="P:malonyl-CoA biosynthetic process"/>
    <property type="evidence" value="ECO:0007669"/>
    <property type="project" value="UniProtKB-UniRule"/>
</dbReference>
<dbReference type="Gene3D" id="3.90.226.10">
    <property type="entry name" value="2-enoyl-CoA Hydratase, Chain A, domain 1"/>
    <property type="match status" value="1"/>
</dbReference>
<dbReference type="HAMAP" id="MF_00823">
    <property type="entry name" value="AcetylCoA_CT_alpha"/>
    <property type="match status" value="1"/>
</dbReference>
<dbReference type="InterPro" id="IPR001095">
    <property type="entry name" value="Acetyl_CoA_COase_a_su"/>
</dbReference>
<dbReference type="InterPro" id="IPR029045">
    <property type="entry name" value="ClpP/crotonase-like_dom_sf"/>
</dbReference>
<dbReference type="InterPro" id="IPR011763">
    <property type="entry name" value="COA_CT_C"/>
</dbReference>
<dbReference type="NCBIfam" id="TIGR00513">
    <property type="entry name" value="accA"/>
    <property type="match status" value="1"/>
</dbReference>
<dbReference type="NCBIfam" id="NF041504">
    <property type="entry name" value="AccA_sub"/>
    <property type="match status" value="1"/>
</dbReference>
<dbReference type="NCBIfam" id="NF004344">
    <property type="entry name" value="PRK05724.1"/>
    <property type="match status" value="1"/>
</dbReference>
<dbReference type="PANTHER" id="PTHR42853">
    <property type="entry name" value="ACETYL-COENZYME A CARBOXYLASE CARBOXYL TRANSFERASE SUBUNIT ALPHA"/>
    <property type="match status" value="1"/>
</dbReference>
<dbReference type="PANTHER" id="PTHR42853:SF3">
    <property type="entry name" value="ACETYL-COENZYME A CARBOXYLASE CARBOXYL TRANSFERASE SUBUNIT ALPHA, CHLOROPLASTIC"/>
    <property type="match status" value="1"/>
</dbReference>
<dbReference type="Pfam" id="PF03255">
    <property type="entry name" value="ACCA"/>
    <property type="match status" value="1"/>
</dbReference>
<dbReference type="PRINTS" id="PR01069">
    <property type="entry name" value="ACCCTRFRASEA"/>
</dbReference>
<dbReference type="SUPFAM" id="SSF52096">
    <property type="entry name" value="ClpP/crotonase"/>
    <property type="match status" value="1"/>
</dbReference>
<dbReference type="PROSITE" id="PS50989">
    <property type="entry name" value="COA_CT_CTER"/>
    <property type="match status" value="1"/>
</dbReference>
<proteinExistence type="inferred from homology"/>
<feature type="chain" id="PRO_1000213132" description="Acetyl-coenzyme A carboxylase carboxyl transferase subunit alpha">
    <location>
        <begin position="1"/>
        <end position="318"/>
    </location>
</feature>
<feature type="domain" description="CoA carboxyltransferase C-terminal" evidence="2">
    <location>
        <begin position="36"/>
        <end position="293"/>
    </location>
</feature>
<keyword id="KW-0067">ATP-binding</keyword>
<keyword id="KW-0963">Cytoplasm</keyword>
<keyword id="KW-0275">Fatty acid biosynthesis</keyword>
<keyword id="KW-0276">Fatty acid metabolism</keyword>
<keyword id="KW-0444">Lipid biosynthesis</keyword>
<keyword id="KW-0443">Lipid metabolism</keyword>
<keyword id="KW-0547">Nucleotide-binding</keyword>
<keyword id="KW-1185">Reference proteome</keyword>
<keyword id="KW-0808">Transferase</keyword>
<comment type="function">
    <text evidence="1">Component of the acetyl coenzyme A carboxylase (ACC) complex. First, biotin carboxylase catalyzes the carboxylation of biotin on its carrier protein (BCCP) and then the CO(2) group is transferred by the carboxyltransferase to acetyl-CoA to form malonyl-CoA.</text>
</comment>
<comment type="catalytic activity">
    <reaction evidence="1">
        <text>N(6)-carboxybiotinyl-L-lysyl-[protein] + acetyl-CoA = N(6)-biotinyl-L-lysyl-[protein] + malonyl-CoA</text>
        <dbReference type="Rhea" id="RHEA:54728"/>
        <dbReference type="Rhea" id="RHEA-COMP:10505"/>
        <dbReference type="Rhea" id="RHEA-COMP:10506"/>
        <dbReference type="ChEBI" id="CHEBI:57288"/>
        <dbReference type="ChEBI" id="CHEBI:57384"/>
        <dbReference type="ChEBI" id="CHEBI:83144"/>
        <dbReference type="ChEBI" id="CHEBI:83145"/>
        <dbReference type="EC" id="2.1.3.15"/>
    </reaction>
</comment>
<comment type="pathway">
    <text evidence="1">Lipid metabolism; malonyl-CoA biosynthesis; malonyl-CoA from acetyl-CoA: step 1/1.</text>
</comment>
<comment type="subunit">
    <text evidence="1">Acetyl-CoA carboxylase is a heterohexamer composed of biotin carboxyl carrier protein (AccB), biotin carboxylase (AccC) and two subunits each of ACCase subunit alpha (AccA) and ACCase subunit beta (AccD).</text>
</comment>
<comment type="subcellular location">
    <subcellularLocation>
        <location evidence="1">Cytoplasm</location>
    </subcellularLocation>
</comment>
<comment type="similarity">
    <text evidence="1">Belongs to the AccA family.</text>
</comment>
<protein>
    <recommendedName>
        <fullName evidence="1">Acetyl-coenzyme A carboxylase carboxyl transferase subunit alpha</fullName>
        <shortName evidence="1">ACCase subunit alpha</shortName>
        <shortName evidence="1">Acetyl-CoA carboxylase carboxyltransferase subunit alpha</shortName>
        <ecNumber evidence="1">2.1.3.15</ecNumber>
    </recommendedName>
</protein>
<organism>
    <name type="scientific">Teredinibacter turnerae (strain ATCC 39867 / T7901)</name>
    <dbReference type="NCBI Taxonomy" id="377629"/>
    <lineage>
        <taxon>Bacteria</taxon>
        <taxon>Pseudomonadati</taxon>
        <taxon>Pseudomonadota</taxon>
        <taxon>Gammaproteobacteria</taxon>
        <taxon>Cellvibrionales</taxon>
        <taxon>Cellvibrionaceae</taxon>
        <taxon>Teredinibacter</taxon>
    </lineage>
</organism>